<gene>
    <name evidence="1" type="primary">rpmF</name>
    <name type="ordered locus">spr1943</name>
</gene>
<accession>Q8CWN3</accession>
<sequence length="60" mass="6772">MAVPARRTSKAKKNKRRTHYKVTAPSVNFDETTGDYSRSHRVSLKGYYKGRKIAKAASAE</sequence>
<reference key="1">
    <citation type="journal article" date="2001" name="J. Bacteriol.">
        <title>Genome of the bacterium Streptococcus pneumoniae strain R6.</title>
        <authorList>
            <person name="Hoskins J."/>
            <person name="Alborn W.E. Jr."/>
            <person name="Arnold J."/>
            <person name="Blaszczak L.C."/>
            <person name="Burgett S."/>
            <person name="DeHoff B.S."/>
            <person name="Estrem S.T."/>
            <person name="Fritz L."/>
            <person name="Fu D.-J."/>
            <person name="Fuller W."/>
            <person name="Geringer C."/>
            <person name="Gilmour R."/>
            <person name="Glass J.S."/>
            <person name="Khoja H."/>
            <person name="Kraft A.R."/>
            <person name="Lagace R.E."/>
            <person name="LeBlanc D.J."/>
            <person name="Lee L.N."/>
            <person name="Lefkowitz E.J."/>
            <person name="Lu J."/>
            <person name="Matsushima P."/>
            <person name="McAhren S.M."/>
            <person name="McHenney M."/>
            <person name="McLeaster K."/>
            <person name="Mundy C.W."/>
            <person name="Nicas T.I."/>
            <person name="Norris F.H."/>
            <person name="O'Gara M."/>
            <person name="Peery R.B."/>
            <person name="Robertson G.T."/>
            <person name="Rockey P."/>
            <person name="Sun P.-M."/>
            <person name="Winkler M.E."/>
            <person name="Yang Y."/>
            <person name="Young-Bellido M."/>
            <person name="Zhao G."/>
            <person name="Zook C.A."/>
            <person name="Baltz R.H."/>
            <person name="Jaskunas S.R."/>
            <person name="Rosteck P.R. Jr."/>
            <person name="Skatrud P.L."/>
            <person name="Glass J.I."/>
        </authorList>
    </citation>
    <scope>NUCLEOTIDE SEQUENCE [LARGE SCALE GENOMIC DNA]</scope>
    <source>
        <strain>ATCC BAA-255 / R6</strain>
    </source>
</reference>
<name>RL32_STRR6</name>
<proteinExistence type="inferred from homology"/>
<feature type="chain" id="PRO_0000172416" description="Large ribosomal subunit protein bL32">
    <location>
        <begin position="1"/>
        <end position="60"/>
    </location>
</feature>
<organism>
    <name type="scientific">Streptococcus pneumoniae (strain ATCC BAA-255 / R6)</name>
    <dbReference type="NCBI Taxonomy" id="171101"/>
    <lineage>
        <taxon>Bacteria</taxon>
        <taxon>Bacillati</taxon>
        <taxon>Bacillota</taxon>
        <taxon>Bacilli</taxon>
        <taxon>Lactobacillales</taxon>
        <taxon>Streptococcaceae</taxon>
        <taxon>Streptococcus</taxon>
    </lineage>
</organism>
<dbReference type="EMBL" id="AE007317">
    <property type="protein sequence ID" value="AAL00745.1"/>
    <property type="molecule type" value="Genomic_DNA"/>
</dbReference>
<dbReference type="PIR" id="D98114">
    <property type="entry name" value="D98114"/>
</dbReference>
<dbReference type="RefSeq" id="NP_359534.1">
    <property type="nucleotide sequence ID" value="NC_003098.1"/>
</dbReference>
<dbReference type="RefSeq" id="WP_000290417.1">
    <property type="nucleotide sequence ID" value="NC_003098.1"/>
</dbReference>
<dbReference type="SMR" id="Q8CWN3"/>
<dbReference type="STRING" id="171101.spr1943"/>
<dbReference type="GeneID" id="49598937"/>
<dbReference type="KEGG" id="spr:spr1943"/>
<dbReference type="PATRIC" id="fig|171101.6.peg.2098"/>
<dbReference type="eggNOG" id="COG0333">
    <property type="taxonomic scope" value="Bacteria"/>
</dbReference>
<dbReference type="HOGENOM" id="CLU_129084_2_3_9"/>
<dbReference type="PRO" id="PR:Q8CWN3"/>
<dbReference type="Proteomes" id="UP000000586">
    <property type="component" value="Chromosome"/>
</dbReference>
<dbReference type="GO" id="GO:0022625">
    <property type="term" value="C:cytosolic large ribosomal subunit"/>
    <property type="evidence" value="ECO:0000318"/>
    <property type="project" value="GO_Central"/>
</dbReference>
<dbReference type="GO" id="GO:0003735">
    <property type="term" value="F:structural constituent of ribosome"/>
    <property type="evidence" value="ECO:0000318"/>
    <property type="project" value="GO_Central"/>
</dbReference>
<dbReference type="GO" id="GO:0006412">
    <property type="term" value="P:translation"/>
    <property type="evidence" value="ECO:0007669"/>
    <property type="project" value="UniProtKB-UniRule"/>
</dbReference>
<dbReference type="HAMAP" id="MF_00340">
    <property type="entry name" value="Ribosomal_bL32"/>
    <property type="match status" value="1"/>
</dbReference>
<dbReference type="InterPro" id="IPR002677">
    <property type="entry name" value="Ribosomal_bL32"/>
</dbReference>
<dbReference type="InterPro" id="IPR044957">
    <property type="entry name" value="Ribosomal_bL32_bact"/>
</dbReference>
<dbReference type="InterPro" id="IPR011332">
    <property type="entry name" value="Ribosomal_zn-bd"/>
</dbReference>
<dbReference type="NCBIfam" id="TIGR01031">
    <property type="entry name" value="rpmF_bact"/>
    <property type="match status" value="1"/>
</dbReference>
<dbReference type="PANTHER" id="PTHR35534">
    <property type="entry name" value="50S RIBOSOMAL PROTEIN L32"/>
    <property type="match status" value="1"/>
</dbReference>
<dbReference type="PANTHER" id="PTHR35534:SF1">
    <property type="entry name" value="LARGE RIBOSOMAL SUBUNIT PROTEIN BL32"/>
    <property type="match status" value="1"/>
</dbReference>
<dbReference type="Pfam" id="PF01783">
    <property type="entry name" value="Ribosomal_L32p"/>
    <property type="match status" value="1"/>
</dbReference>
<dbReference type="SUPFAM" id="SSF57829">
    <property type="entry name" value="Zn-binding ribosomal proteins"/>
    <property type="match status" value="1"/>
</dbReference>
<comment type="similarity">
    <text evidence="1">Belongs to the bacterial ribosomal protein bL32 family.</text>
</comment>
<evidence type="ECO:0000255" key="1">
    <source>
        <dbReference type="HAMAP-Rule" id="MF_00340"/>
    </source>
</evidence>
<evidence type="ECO:0000305" key="2"/>
<keyword id="KW-1185">Reference proteome</keyword>
<keyword id="KW-0687">Ribonucleoprotein</keyword>
<keyword id="KW-0689">Ribosomal protein</keyword>
<protein>
    <recommendedName>
        <fullName evidence="1">Large ribosomal subunit protein bL32</fullName>
    </recommendedName>
    <alternativeName>
        <fullName evidence="2">50S ribosomal protein L32</fullName>
    </alternativeName>
</protein>